<feature type="chain" id="PRO_0000336117" description="UPF0102 protein Amet_2739">
    <location>
        <begin position="1"/>
        <end position="114"/>
    </location>
</feature>
<dbReference type="EMBL" id="CP000724">
    <property type="protein sequence ID" value="ABR48890.1"/>
    <property type="molecule type" value="Genomic_DNA"/>
</dbReference>
<dbReference type="RefSeq" id="WP_012063862.1">
    <property type="nucleotide sequence ID" value="NC_009633.1"/>
</dbReference>
<dbReference type="SMR" id="A6TRS2"/>
<dbReference type="STRING" id="293826.Amet_2739"/>
<dbReference type="KEGG" id="amt:Amet_2739"/>
<dbReference type="eggNOG" id="COG0792">
    <property type="taxonomic scope" value="Bacteria"/>
</dbReference>
<dbReference type="HOGENOM" id="CLU_115353_3_1_9"/>
<dbReference type="OrthoDB" id="9802516at2"/>
<dbReference type="Proteomes" id="UP000001572">
    <property type="component" value="Chromosome"/>
</dbReference>
<dbReference type="GO" id="GO:0003676">
    <property type="term" value="F:nucleic acid binding"/>
    <property type="evidence" value="ECO:0007669"/>
    <property type="project" value="InterPro"/>
</dbReference>
<dbReference type="CDD" id="cd20736">
    <property type="entry name" value="PoNe_Nuclease"/>
    <property type="match status" value="1"/>
</dbReference>
<dbReference type="Gene3D" id="3.40.1350.10">
    <property type="match status" value="1"/>
</dbReference>
<dbReference type="HAMAP" id="MF_00048">
    <property type="entry name" value="UPF0102"/>
    <property type="match status" value="1"/>
</dbReference>
<dbReference type="InterPro" id="IPR011335">
    <property type="entry name" value="Restrct_endonuc-II-like"/>
</dbReference>
<dbReference type="InterPro" id="IPR011856">
    <property type="entry name" value="tRNA_endonuc-like_dom_sf"/>
</dbReference>
<dbReference type="InterPro" id="IPR003509">
    <property type="entry name" value="UPF0102_YraN-like"/>
</dbReference>
<dbReference type="NCBIfam" id="NF009150">
    <property type="entry name" value="PRK12497.1-3"/>
    <property type="match status" value="1"/>
</dbReference>
<dbReference type="NCBIfam" id="NF009154">
    <property type="entry name" value="PRK12497.3-3"/>
    <property type="match status" value="1"/>
</dbReference>
<dbReference type="NCBIfam" id="TIGR00252">
    <property type="entry name" value="YraN family protein"/>
    <property type="match status" value="1"/>
</dbReference>
<dbReference type="PANTHER" id="PTHR34039">
    <property type="entry name" value="UPF0102 PROTEIN YRAN"/>
    <property type="match status" value="1"/>
</dbReference>
<dbReference type="PANTHER" id="PTHR34039:SF1">
    <property type="entry name" value="UPF0102 PROTEIN YRAN"/>
    <property type="match status" value="1"/>
</dbReference>
<dbReference type="Pfam" id="PF02021">
    <property type="entry name" value="UPF0102"/>
    <property type="match status" value="1"/>
</dbReference>
<dbReference type="SUPFAM" id="SSF52980">
    <property type="entry name" value="Restriction endonuclease-like"/>
    <property type="match status" value="1"/>
</dbReference>
<gene>
    <name type="ordered locus">Amet_2739</name>
</gene>
<name>Y2739_ALKMQ</name>
<comment type="similarity">
    <text evidence="1">Belongs to the UPF0102 family.</text>
</comment>
<reference key="1">
    <citation type="journal article" date="2016" name="Genome Announc.">
        <title>Complete genome sequence of Alkaliphilus metalliredigens strain QYMF, an alkaliphilic and metal-reducing bacterium isolated from borax-contaminated leachate ponds.</title>
        <authorList>
            <person name="Hwang C."/>
            <person name="Copeland A."/>
            <person name="Lucas S."/>
            <person name="Lapidus A."/>
            <person name="Barry K."/>
            <person name="Detter J.C."/>
            <person name="Glavina Del Rio T."/>
            <person name="Hammon N."/>
            <person name="Israni S."/>
            <person name="Dalin E."/>
            <person name="Tice H."/>
            <person name="Pitluck S."/>
            <person name="Chertkov O."/>
            <person name="Brettin T."/>
            <person name="Bruce D."/>
            <person name="Han C."/>
            <person name="Schmutz J."/>
            <person name="Larimer F."/>
            <person name="Land M.L."/>
            <person name="Hauser L."/>
            <person name="Kyrpides N."/>
            <person name="Mikhailova N."/>
            <person name="Ye Q."/>
            <person name="Zhou J."/>
            <person name="Richardson P."/>
            <person name="Fields M.W."/>
        </authorList>
    </citation>
    <scope>NUCLEOTIDE SEQUENCE [LARGE SCALE GENOMIC DNA]</scope>
    <source>
        <strain>QYMF</strain>
    </source>
</reference>
<proteinExistence type="inferred from homology"/>
<accession>A6TRS2</accession>
<protein>
    <recommendedName>
        <fullName evidence="1">UPF0102 protein Amet_2739</fullName>
    </recommendedName>
</protein>
<evidence type="ECO:0000255" key="1">
    <source>
        <dbReference type="HAMAP-Rule" id="MF_00048"/>
    </source>
</evidence>
<keyword id="KW-1185">Reference proteome</keyword>
<organism>
    <name type="scientific">Alkaliphilus metalliredigens (strain QYMF)</name>
    <dbReference type="NCBI Taxonomy" id="293826"/>
    <lineage>
        <taxon>Bacteria</taxon>
        <taxon>Bacillati</taxon>
        <taxon>Bacillota</taxon>
        <taxon>Clostridia</taxon>
        <taxon>Peptostreptococcales</taxon>
        <taxon>Natronincolaceae</taxon>
        <taxon>Alkaliphilus</taxon>
    </lineage>
</organism>
<sequence>MSKSLGELGERIIGQYLEKKGYRLIETNYRTKLGEIDIIAYKGTIIAFVEVKTRRSQSYGMPCEAVNWQKQQRLHRVASHYIARKGLINYDFRFDVAEVIIGKEKKIHYINNAF</sequence>